<proteinExistence type="inferred from homology"/>
<name>PURL_STAAE</name>
<protein>
    <recommendedName>
        <fullName evidence="1">Phosphoribosylformylglycinamidine synthase subunit PurL</fullName>
        <shortName evidence="1">FGAM synthase</shortName>
        <ecNumber evidence="1">6.3.5.3</ecNumber>
    </recommendedName>
    <alternativeName>
        <fullName evidence="1">Formylglycinamide ribonucleotide amidotransferase subunit II</fullName>
        <shortName evidence="1">FGAR amidotransferase II</shortName>
        <shortName evidence="1">FGAR-AT II</shortName>
    </alternativeName>
    <alternativeName>
        <fullName evidence="1">Glutamine amidotransferase PurL</fullName>
    </alternativeName>
    <alternativeName>
        <fullName evidence="1">Phosphoribosylformylglycinamidine synthase subunit II</fullName>
    </alternativeName>
</protein>
<accession>A6QFS7</accession>
<organism>
    <name type="scientific">Staphylococcus aureus (strain Newman)</name>
    <dbReference type="NCBI Taxonomy" id="426430"/>
    <lineage>
        <taxon>Bacteria</taxon>
        <taxon>Bacillati</taxon>
        <taxon>Bacillota</taxon>
        <taxon>Bacilli</taxon>
        <taxon>Bacillales</taxon>
        <taxon>Staphylococcaceae</taxon>
        <taxon>Staphylococcus</taxon>
    </lineage>
</organism>
<dbReference type="EC" id="6.3.5.3" evidence="1"/>
<dbReference type="EMBL" id="AP009351">
    <property type="protein sequence ID" value="BAF67209.1"/>
    <property type="molecule type" value="Genomic_DNA"/>
</dbReference>
<dbReference type="RefSeq" id="WP_000032727.1">
    <property type="nucleotide sequence ID" value="NZ_JBBIAE010000002.1"/>
</dbReference>
<dbReference type="SMR" id="A6QFS7"/>
<dbReference type="KEGG" id="sae:NWMN_0937"/>
<dbReference type="HOGENOM" id="CLU_003100_0_1_9"/>
<dbReference type="UniPathway" id="UPA00074">
    <property type="reaction ID" value="UER00128"/>
</dbReference>
<dbReference type="Proteomes" id="UP000006386">
    <property type="component" value="Chromosome"/>
</dbReference>
<dbReference type="GO" id="GO:0005737">
    <property type="term" value="C:cytoplasm"/>
    <property type="evidence" value="ECO:0007669"/>
    <property type="project" value="UniProtKB-SubCell"/>
</dbReference>
<dbReference type="GO" id="GO:0005524">
    <property type="term" value="F:ATP binding"/>
    <property type="evidence" value="ECO:0007669"/>
    <property type="project" value="UniProtKB-UniRule"/>
</dbReference>
<dbReference type="GO" id="GO:0000287">
    <property type="term" value="F:magnesium ion binding"/>
    <property type="evidence" value="ECO:0007669"/>
    <property type="project" value="UniProtKB-UniRule"/>
</dbReference>
<dbReference type="GO" id="GO:0004642">
    <property type="term" value="F:phosphoribosylformylglycinamidine synthase activity"/>
    <property type="evidence" value="ECO:0007669"/>
    <property type="project" value="UniProtKB-UniRule"/>
</dbReference>
<dbReference type="GO" id="GO:0006189">
    <property type="term" value="P:'de novo' IMP biosynthetic process"/>
    <property type="evidence" value="ECO:0007669"/>
    <property type="project" value="UniProtKB-UniRule"/>
</dbReference>
<dbReference type="CDD" id="cd02203">
    <property type="entry name" value="PurL_repeat1"/>
    <property type="match status" value="1"/>
</dbReference>
<dbReference type="CDD" id="cd02204">
    <property type="entry name" value="PurL_repeat2"/>
    <property type="match status" value="1"/>
</dbReference>
<dbReference type="FunFam" id="3.30.1330.10:FF:000004">
    <property type="entry name" value="Phosphoribosylformylglycinamidine synthase subunit PurL"/>
    <property type="match status" value="1"/>
</dbReference>
<dbReference type="Gene3D" id="3.90.650.10">
    <property type="entry name" value="PurM-like C-terminal domain"/>
    <property type="match status" value="2"/>
</dbReference>
<dbReference type="Gene3D" id="3.30.1330.10">
    <property type="entry name" value="PurM-like, N-terminal domain"/>
    <property type="match status" value="2"/>
</dbReference>
<dbReference type="HAMAP" id="MF_00420">
    <property type="entry name" value="PurL_2"/>
    <property type="match status" value="1"/>
</dbReference>
<dbReference type="InterPro" id="IPR010074">
    <property type="entry name" value="PRibForGlyAmidine_synth_PurL"/>
</dbReference>
<dbReference type="InterPro" id="IPR041609">
    <property type="entry name" value="PurL_linker"/>
</dbReference>
<dbReference type="InterPro" id="IPR010918">
    <property type="entry name" value="PurM-like_C_dom"/>
</dbReference>
<dbReference type="InterPro" id="IPR036676">
    <property type="entry name" value="PurM-like_C_sf"/>
</dbReference>
<dbReference type="InterPro" id="IPR016188">
    <property type="entry name" value="PurM-like_N"/>
</dbReference>
<dbReference type="InterPro" id="IPR036921">
    <property type="entry name" value="PurM-like_N_sf"/>
</dbReference>
<dbReference type="NCBIfam" id="TIGR01736">
    <property type="entry name" value="FGAM_synth_II"/>
    <property type="match status" value="1"/>
</dbReference>
<dbReference type="NCBIfam" id="NF002290">
    <property type="entry name" value="PRK01213.1"/>
    <property type="match status" value="1"/>
</dbReference>
<dbReference type="PANTHER" id="PTHR43555">
    <property type="entry name" value="PHOSPHORIBOSYLFORMYLGLYCINAMIDINE SYNTHASE SUBUNIT PURL"/>
    <property type="match status" value="1"/>
</dbReference>
<dbReference type="PANTHER" id="PTHR43555:SF1">
    <property type="entry name" value="PHOSPHORIBOSYLFORMYLGLYCINAMIDINE SYNTHASE SUBUNIT PURL"/>
    <property type="match status" value="1"/>
</dbReference>
<dbReference type="Pfam" id="PF00586">
    <property type="entry name" value="AIRS"/>
    <property type="match status" value="2"/>
</dbReference>
<dbReference type="Pfam" id="PF02769">
    <property type="entry name" value="AIRS_C"/>
    <property type="match status" value="1"/>
</dbReference>
<dbReference type="Pfam" id="PF18072">
    <property type="entry name" value="FGAR-AT_linker"/>
    <property type="match status" value="1"/>
</dbReference>
<dbReference type="PIRSF" id="PIRSF001587">
    <property type="entry name" value="FGAM_synthase_II"/>
    <property type="match status" value="1"/>
</dbReference>
<dbReference type="SUPFAM" id="SSF56042">
    <property type="entry name" value="PurM C-terminal domain-like"/>
    <property type="match status" value="2"/>
</dbReference>
<dbReference type="SUPFAM" id="SSF55326">
    <property type="entry name" value="PurM N-terminal domain-like"/>
    <property type="match status" value="2"/>
</dbReference>
<keyword id="KW-0067">ATP-binding</keyword>
<keyword id="KW-0963">Cytoplasm</keyword>
<keyword id="KW-0436">Ligase</keyword>
<keyword id="KW-0460">Magnesium</keyword>
<keyword id="KW-0479">Metal-binding</keyword>
<keyword id="KW-0547">Nucleotide-binding</keyword>
<keyword id="KW-0658">Purine biosynthesis</keyword>
<gene>
    <name evidence="1" type="primary">purL</name>
    <name type="ordered locus">NWMN_0937</name>
</gene>
<reference key="1">
    <citation type="journal article" date="2008" name="J. Bacteriol.">
        <title>Genome sequence of Staphylococcus aureus strain Newman and comparative analysis of staphylococcal genomes: polymorphism and evolution of two major pathogenicity islands.</title>
        <authorList>
            <person name="Baba T."/>
            <person name="Bae T."/>
            <person name="Schneewind O."/>
            <person name="Takeuchi F."/>
            <person name="Hiramatsu K."/>
        </authorList>
    </citation>
    <scope>NUCLEOTIDE SEQUENCE [LARGE SCALE GENOMIC DNA]</scope>
    <source>
        <strain>Newman</strain>
    </source>
</reference>
<evidence type="ECO:0000255" key="1">
    <source>
        <dbReference type="HAMAP-Rule" id="MF_00420"/>
    </source>
</evidence>
<comment type="function">
    <text evidence="1">Part of the phosphoribosylformylglycinamidine synthase complex involved in the purines biosynthetic pathway. Catalyzes the ATP-dependent conversion of formylglycinamide ribonucleotide (FGAR) and glutamine to yield formylglycinamidine ribonucleotide (FGAM) and glutamate. The FGAM synthase complex is composed of three subunits. PurQ produces an ammonia molecule by converting glutamine to glutamate. PurL transfers the ammonia molecule to FGAR to form FGAM in an ATP-dependent manner. PurS interacts with PurQ and PurL and is thought to assist in the transfer of the ammonia molecule from PurQ to PurL.</text>
</comment>
<comment type="catalytic activity">
    <reaction evidence="1">
        <text>N(2)-formyl-N(1)-(5-phospho-beta-D-ribosyl)glycinamide + L-glutamine + ATP + H2O = 2-formamido-N(1)-(5-O-phospho-beta-D-ribosyl)acetamidine + L-glutamate + ADP + phosphate + H(+)</text>
        <dbReference type="Rhea" id="RHEA:17129"/>
        <dbReference type="ChEBI" id="CHEBI:15377"/>
        <dbReference type="ChEBI" id="CHEBI:15378"/>
        <dbReference type="ChEBI" id="CHEBI:29985"/>
        <dbReference type="ChEBI" id="CHEBI:30616"/>
        <dbReference type="ChEBI" id="CHEBI:43474"/>
        <dbReference type="ChEBI" id="CHEBI:58359"/>
        <dbReference type="ChEBI" id="CHEBI:147286"/>
        <dbReference type="ChEBI" id="CHEBI:147287"/>
        <dbReference type="ChEBI" id="CHEBI:456216"/>
        <dbReference type="EC" id="6.3.5.3"/>
    </reaction>
</comment>
<comment type="pathway">
    <text evidence="1">Purine metabolism; IMP biosynthesis via de novo pathway; 5-amino-1-(5-phospho-D-ribosyl)imidazole from N(2)-formyl-N(1)-(5-phospho-D-ribosyl)glycinamide: step 1/2.</text>
</comment>
<comment type="subunit">
    <text evidence="1">Monomer. Part of the FGAM synthase complex composed of 1 PurL, 1 PurQ and 2 PurS subunits.</text>
</comment>
<comment type="subcellular location">
    <subcellularLocation>
        <location evidence="1">Cytoplasm</location>
    </subcellularLocation>
</comment>
<comment type="similarity">
    <text evidence="1">Belongs to the FGAMS family.</text>
</comment>
<sequence length="729" mass="79536">MSKFIEPSVEEIKLEKVYQDMGLSDQEYEKVCDILGRQPNFTETGIFSVMWSEHCSYKHSKPFLKQFPTSGDHVLMGPGEGAGVVDIGDNQAVVFKVESHNHPSAIEPYQGAATGVGGIIRDIVSIGARPINLLNSLRFGELDNKQNQRLLKGVVKGIGGYGNCIGIPTTAGEIEFDERYDGNPLVNAMCVGVINHDMIQKGTAKGVGNSVIYVGLKTGRDGIHGATFASEELTEESESKRPSVQIGDPFVGKKLMEATLEAITFDELVGIQDMGAAGLTSSSSEMAAKGGSGLHLRLEQVPTREPGISPYEMMLSETQERMLLVVEKGTEQKFLDLFDKHELDSAVIGEVTDTNRFVLTYDDEVYADIPVEPLADEAPVYILEGEEKDYNTSKNDYTHIDVKDTFFKLLKHPTIASKHYLYDQYDQQVGANTIIKPGLQASVVRVEGTNKAIASTIDGEARYVYNNPYEGGKMVVAEAYRNLIAVGATPLAMTDCLNYGSPEKKEIYQQLIDSTKGMAEACDILKTPVVSGNVSLYNETKGTSIFPTPVVGMVGLIENVNYLNDFEPQVGDKLYLIGDTKDDFGGSQLEKLIYGKVNHEFESLDLSSEVEKGESIKTAIREGLLSHVQTVGKGGLLITLAKLSAHYGLGLKSSIDITNAQLFSETQGRYVVSVKSGKTLNIDNAIEIGLLTDSDNFKVTTPYTEISENVSDIKQIWEGAIAQCLTTQD</sequence>
<feature type="chain" id="PRO_1000072300" description="Phosphoribosylformylglycinamidine synthase subunit PurL">
    <location>
        <begin position="1"/>
        <end position="729"/>
    </location>
</feature>
<feature type="active site" evidence="1">
    <location>
        <position position="54"/>
    </location>
</feature>
<feature type="active site" description="Proton acceptor" evidence="1">
    <location>
        <position position="100"/>
    </location>
</feature>
<feature type="binding site" evidence="1">
    <location>
        <position position="57"/>
    </location>
    <ligand>
        <name>ATP</name>
        <dbReference type="ChEBI" id="CHEBI:30616"/>
    </ligand>
</feature>
<feature type="binding site" evidence="1">
    <location>
        <position position="96"/>
    </location>
    <ligand>
        <name>ATP</name>
        <dbReference type="ChEBI" id="CHEBI:30616"/>
    </ligand>
</feature>
<feature type="binding site" evidence="1">
    <location>
        <position position="98"/>
    </location>
    <ligand>
        <name>Mg(2+)</name>
        <dbReference type="ChEBI" id="CHEBI:18420"/>
        <label>1</label>
    </ligand>
</feature>
<feature type="binding site" evidence="1">
    <location>
        <begin position="99"/>
        <end position="102"/>
    </location>
    <ligand>
        <name>substrate</name>
    </ligand>
</feature>
<feature type="binding site" evidence="1">
    <location>
        <position position="121"/>
    </location>
    <ligand>
        <name>substrate</name>
    </ligand>
</feature>
<feature type="binding site" evidence="1">
    <location>
        <position position="122"/>
    </location>
    <ligand>
        <name>Mg(2+)</name>
        <dbReference type="ChEBI" id="CHEBI:18420"/>
        <label>2</label>
    </ligand>
</feature>
<feature type="binding site" evidence="1">
    <location>
        <position position="245"/>
    </location>
    <ligand>
        <name>substrate</name>
    </ligand>
</feature>
<feature type="binding site" evidence="1">
    <location>
        <position position="273"/>
    </location>
    <ligand>
        <name>Mg(2+)</name>
        <dbReference type="ChEBI" id="CHEBI:18420"/>
        <label>2</label>
    </ligand>
</feature>
<feature type="binding site" evidence="1">
    <location>
        <begin position="317"/>
        <end position="319"/>
    </location>
    <ligand>
        <name>substrate</name>
    </ligand>
</feature>
<feature type="binding site" evidence="1">
    <location>
        <position position="495"/>
    </location>
    <ligand>
        <name>ATP</name>
        <dbReference type="ChEBI" id="CHEBI:30616"/>
    </ligand>
</feature>
<feature type="binding site" evidence="1">
    <location>
        <position position="532"/>
    </location>
    <ligand>
        <name>ATP</name>
        <dbReference type="ChEBI" id="CHEBI:30616"/>
    </ligand>
</feature>
<feature type="binding site" evidence="1">
    <location>
        <position position="533"/>
    </location>
    <ligand>
        <name>Mg(2+)</name>
        <dbReference type="ChEBI" id="CHEBI:18420"/>
        <label>1</label>
    </ligand>
</feature>
<feature type="binding site" evidence="1">
    <location>
        <position position="535"/>
    </location>
    <ligand>
        <name>substrate</name>
    </ligand>
</feature>